<evidence type="ECO:0000255" key="1">
    <source>
        <dbReference type="HAMAP-Rule" id="MF_02126"/>
    </source>
</evidence>
<organism>
    <name type="scientific">Rhodopirellula baltica (strain DSM 10527 / NCIMB 13988 / SH1)</name>
    <dbReference type="NCBI Taxonomy" id="243090"/>
    <lineage>
        <taxon>Bacteria</taxon>
        <taxon>Pseudomonadati</taxon>
        <taxon>Planctomycetota</taxon>
        <taxon>Planctomycetia</taxon>
        <taxon>Pirellulales</taxon>
        <taxon>Pirellulaceae</taxon>
        <taxon>Rhodopirellula</taxon>
    </lineage>
</organism>
<dbReference type="EC" id="2.1.1.297" evidence="1"/>
<dbReference type="EMBL" id="BX294149">
    <property type="protein sequence ID" value="CAD76187.1"/>
    <property type="molecule type" value="Genomic_DNA"/>
</dbReference>
<dbReference type="RefSeq" id="NP_868810.1">
    <property type="nucleotide sequence ID" value="NC_005027.1"/>
</dbReference>
<dbReference type="RefSeq" id="WP_011122233.1">
    <property type="nucleotide sequence ID" value="NC_005027.1"/>
</dbReference>
<dbReference type="SMR" id="Q7ULT2"/>
<dbReference type="FunCoup" id="Q7ULT2">
    <property type="interactions" value="448"/>
</dbReference>
<dbReference type="STRING" id="243090.RB9306"/>
<dbReference type="EnsemblBacteria" id="CAD76187">
    <property type="protein sequence ID" value="CAD76187"/>
    <property type="gene ID" value="RB9306"/>
</dbReference>
<dbReference type="KEGG" id="rba:RB9306"/>
<dbReference type="PATRIC" id="fig|243090.15.peg.4459"/>
<dbReference type="eggNOG" id="COG2890">
    <property type="taxonomic scope" value="Bacteria"/>
</dbReference>
<dbReference type="HOGENOM" id="CLU_018398_3_1_0"/>
<dbReference type="InParanoid" id="Q7ULT2"/>
<dbReference type="OrthoDB" id="9800643at2"/>
<dbReference type="Proteomes" id="UP000001025">
    <property type="component" value="Chromosome"/>
</dbReference>
<dbReference type="GO" id="GO:0102559">
    <property type="term" value="F:protein-(glutamine-N5) methyltransferase activity"/>
    <property type="evidence" value="ECO:0007669"/>
    <property type="project" value="UniProtKB-EC"/>
</dbReference>
<dbReference type="GO" id="GO:0036009">
    <property type="term" value="F:protein-glutamine N-methyltransferase activity"/>
    <property type="evidence" value="ECO:0000318"/>
    <property type="project" value="GO_Central"/>
</dbReference>
<dbReference type="GO" id="GO:0032259">
    <property type="term" value="P:methylation"/>
    <property type="evidence" value="ECO:0007669"/>
    <property type="project" value="UniProtKB-KW"/>
</dbReference>
<dbReference type="GO" id="GO:0006415">
    <property type="term" value="P:translational termination"/>
    <property type="evidence" value="ECO:0000318"/>
    <property type="project" value="GO_Central"/>
</dbReference>
<dbReference type="CDD" id="cd02440">
    <property type="entry name" value="AdoMet_MTases"/>
    <property type="match status" value="1"/>
</dbReference>
<dbReference type="Gene3D" id="1.10.8.10">
    <property type="entry name" value="DNA helicase RuvA subunit, C-terminal domain"/>
    <property type="match status" value="1"/>
</dbReference>
<dbReference type="Gene3D" id="3.40.50.150">
    <property type="entry name" value="Vaccinia Virus protein VP39"/>
    <property type="match status" value="1"/>
</dbReference>
<dbReference type="HAMAP" id="MF_02126">
    <property type="entry name" value="RF_methyltr_PrmC"/>
    <property type="match status" value="1"/>
</dbReference>
<dbReference type="InterPro" id="IPR004556">
    <property type="entry name" value="HemK-like"/>
</dbReference>
<dbReference type="InterPro" id="IPR050320">
    <property type="entry name" value="N5-glutamine_MTase"/>
</dbReference>
<dbReference type="InterPro" id="IPR040758">
    <property type="entry name" value="PrmC_N"/>
</dbReference>
<dbReference type="InterPro" id="IPR019874">
    <property type="entry name" value="RF_methyltr_PrmC"/>
</dbReference>
<dbReference type="InterPro" id="IPR029063">
    <property type="entry name" value="SAM-dependent_MTases_sf"/>
</dbReference>
<dbReference type="InterPro" id="IPR007848">
    <property type="entry name" value="Small_mtfrase_dom"/>
</dbReference>
<dbReference type="NCBIfam" id="TIGR00536">
    <property type="entry name" value="hemK_fam"/>
    <property type="match status" value="1"/>
</dbReference>
<dbReference type="NCBIfam" id="TIGR03534">
    <property type="entry name" value="RF_mod_PrmC"/>
    <property type="match status" value="1"/>
</dbReference>
<dbReference type="PANTHER" id="PTHR18895">
    <property type="entry name" value="HEMK METHYLTRANSFERASE"/>
    <property type="match status" value="1"/>
</dbReference>
<dbReference type="PANTHER" id="PTHR18895:SF74">
    <property type="entry name" value="MTRF1L RELEASE FACTOR GLUTAMINE METHYLTRANSFERASE"/>
    <property type="match status" value="1"/>
</dbReference>
<dbReference type="Pfam" id="PF05175">
    <property type="entry name" value="MTS"/>
    <property type="match status" value="1"/>
</dbReference>
<dbReference type="Pfam" id="PF17827">
    <property type="entry name" value="PrmC_N"/>
    <property type="match status" value="1"/>
</dbReference>
<dbReference type="SUPFAM" id="SSF53335">
    <property type="entry name" value="S-adenosyl-L-methionine-dependent methyltransferases"/>
    <property type="match status" value="1"/>
</dbReference>
<proteinExistence type="inferred from homology"/>
<protein>
    <recommendedName>
        <fullName evidence="1">Release factor glutamine methyltransferase</fullName>
        <shortName evidence="1">RF MTase</shortName>
        <ecNumber evidence="1">2.1.1.297</ecNumber>
    </recommendedName>
    <alternativeName>
        <fullName evidence="1">N5-glutamine methyltransferase PrmC</fullName>
    </alternativeName>
    <alternativeName>
        <fullName evidence="1">Protein-(glutamine-N5) MTase PrmC</fullName>
    </alternativeName>
    <alternativeName>
        <fullName evidence="1">Protein-glutamine N-methyltransferase PrmC</fullName>
    </alternativeName>
</protein>
<name>PRMC_RHOBA</name>
<sequence>MAETSNDTPWTVMRLLEWTTDFFRKKGSESPRLDAEILLAHARGCQRIELYTSFDKVPEEEQRVAFRELVRRRGEGAPVAQLVGYREFYSISIRVDENVLVPRPETEHLVIEAIDQIKGRLSDRPSPTVLDIGTGSGAIAVAIAKSLPKTQVTAVDISLTALDIAKWNVENLKLSDRVTLLQSDLFDGLEPDQTFDVICSNPPYISQSEYDELPTTVREFEPRGALLSGPDGTEIIARLLNDSVQRLNDGGQLIIELSPMIAGVSKTLAEQNGGYKEIHLIKDLAGHERILSMQKA</sequence>
<comment type="function">
    <text evidence="1">Methylates the class 1 translation termination release factors RF1/PrfA and RF2/PrfB on the glutamine residue of the universally conserved GGQ motif.</text>
</comment>
<comment type="catalytic activity">
    <reaction evidence="1">
        <text>L-glutaminyl-[peptide chain release factor] + S-adenosyl-L-methionine = N(5)-methyl-L-glutaminyl-[peptide chain release factor] + S-adenosyl-L-homocysteine + H(+)</text>
        <dbReference type="Rhea" id="RHEA:42896"/>
        <dbReference type="Rhea" id="RHEA-COMP:10271"/>
        <dbReference type="Rhea" id="RHEA-COMP:10272"/>
        <dbReference type="ChEBI" id="CHEBI:15378"/>
        <dbReference type="ChEBI" id="CHEBI:30011"/>
        <dbReference type="ChEBI" id="CHEBI:57856"/>
        <dbReference type="ChEBI" id="CHEBI:59789"/>
        <dbReference type="ChEBI" id="CHEBI:61891"/>
        <dbReference type="EC" id="2.1.1.297"/>
    </reaction>
</comment>
<comment type="similarity">
    <text evidence="1">Belongs to the protein N5-glutamine methyltransferase family. PrmC subfamily.</text>
</comment>
<keyword id="KW-0489">Methyltransferase</keyword>
<keyword id="KW-1185">Reference proteome</keyword>
<keyword id="KW-0949">S-adenosyl-L-methionine</keyword>
<keyword id="KW-0808">Transferase</keyword>
<feature type="chain" id="PRO_0000414538" description="Release factor glutamine methyltransferase">
    <location>
        <begin position="1"/>
        <end position="296"/>
    </location>
</feature>
<feature type="binding site" evidence="1">
    <location>
        <begin position="133"/>
        <end position="137"/>
    </location>
    <ligand>
        <name>S-adenosyl-L-methionine</name>
        <dbReference type="ChEBI" id="CHEBI:59789"/>
    </ligand>
</feature>
<feature type="binding site" evidence="1">
    <location>
        <position position="156"/>
    </location>
    <ligand>
        <name>S-adenosyl-L-methionine</name>
        <dbReference type="ChEBI" id="CHEBI:59789"/>
    </ligand>
</feature>
<feature type="binding site" evidence="1">
    <location>
        <begin position="201"/>
        <end position="204"/>
    </location>
    <ligand>
        <name>substrate</name>
    </ligand>
</feature>
<feature type="binding site" evidence="1">
    <location>
        <position position="201"/>
    </location>
    <ligand>
        <name>S-adenosyl-L-methionine</name>
        <dbReference type="ChEBI" id="CHEBI:59789"/>
    </ligand>
</feature>
<gene>
    <name evidence="1" type="primary">prmC</name>
    <name type="synonym">hemK</name>
    <name type="ordered locus">RB9306</name>
</gene>
<reference key="1">
    <citation type="journal article" date="2003" name="Proc. Natl. Acad. Sci. U.S.A.">
        <title>Complete genome sequence of the marine planctomycete Pirellula sp. strain 1.</title>
        <authorList>
            <person name="Gloeckner F.O."/>
            <person name="Kube M."/>
            <person name="Bauer M."/>
            <person name="Teeling H."/>
            <person name="Lombardot T."/>
            <person name="Ludwig W."/>
            <person name="Gade D."/>
            <person name="Beck A."/>
            <person name="Borzym K."/>
            <person name="Heitmann K."/>
            <person name="Rabus R."/>
            <person name="Schlesner H."/>
            <person name="Amann R."/>
            <person name="Reinhardt R."/>
        </authorList>
    </citation>
    <scope>NUCLEOTIDE SEQUENCE [LARGE SCALE GENOMIC DNA]</scope>
    <source>
        <strain>DSM 10527 / NCIMB 13988 / SH1</strain>
    </source>
</reference>
<accession>Q7ULT2</accession>